<protein>
    <recommendedName>
        <fullName>Calcitonin-2</fullName>
    </recommendedName>
</protein>
<keyword id="KW-0027">Amidation</keyword>
<keyword id="KW-0903">Direct protein sequencing</keyword>
<keyword id="KW-1015">Disulfide bond</keyword>
<keyword id="KW-0372">Hormone</keyword>
<keyword id="KW-0964">Secreted</keyword>
<proteinExistence type="evidence at protein level"/>
<comment type="function">
    <text>Causes a rapid but short-lived drop in the level of calcium and phosphate in blood by promoting the incorporation of those ions in the bones.</text>
</comment>
<comment type="subcellular location">
    <subcellularLocation>
        <location>Secreted</location>
    </subcellularLocation>
</comment>
<comment type="similarity">
    <text evidence="2">Belongs to the calcitonin family.</text>
</comment>
<dbReference type="PIR" id="A01531">
    <property type="entry name" value="TCON2"/>
</dbReference>
<dbReference type="SMR" id="P69068"/>
<dbReference type="GO" id="GO:0005576">
    <property type="term" value="C:extracellular region"/>
    <property type="evidence" value="ECO:0007669"/>
    <property type="project" value="UniProtKB-SubCell"/>
</dbReference>
<dbReference type="GO" id="GO:0005179">
    <property type="term" value="F:hormone activity"/>
    <property type="evidence" value="ECO:0007669"/>
    <property type="project" value="UniProtKB-KW"/>
</dbReference>
<dbReference type="InterPro" id="IPR021118">
    <property type="entry name" value="Calcitonin"/>
</dbReference>
<dbReference type="InterPro" id="IPR021116">
    <property type="entry name" value="Calcitonin/adrenomedullin"/>
</dbReference>
<dbReference type="InterPro" id="IPR018360">
    <property type="entry name" value="Calcitonin_CS"/>
</dbReference>
<dbReference type="InterPro" id="IPR001693">
    <property type="entry name" value="Calcitonin_peptide-like"/>
</dbReference>
<dbReference type="Pfam" id="PF00214">
    <property type="entry name" value="Calc_CGRP_IAPP"/>
    <property type="match status" value="1"/>
</dbReference>
<dbReference type="PRINTS" id="PR00270">
    <property type="entry name" value="CALCITONINA"/>
</dbReference>
<dbReference type="SMART" id="SM00113">
    <property type="entry name" value="CALCITONIN"/>
    <property type="match status" value="1"/>
</dbReference>
<dbReference type="PROSITE" id="PS00258">
    <property type="entry name" value="CALCITONIN"/>
    <property type="match status" value="1"/>
</dbReference>
<sequence>CSNLSTCVLGKLSQDLHKLQTFPRTNTGAGVP</sequence>
<accession>P69068</accession>
<accession>P01264</accession>
<feature type="peptide" id="PRO_0000044672" description="Calcitonin-2">
    <location>
        <begin position="1"/>
        <end position="32"/>
    </location>
</feature>
<feature type="modified residue" description="Proline amide" evidence="1">
    <location>
        <position position="32"/>
    </location>
</feature>
<feature type="disulfide bond">
    <location>
        <begin position="1"/>
        <end position="7"/>
    </location>
</feature>
<evidence type="ECO:0000269" key="1">
    <source>
    </source>
</evidence>
<evidence type="ECO:0000305" key="2"/>
<reference key="1">
    <citation type="book" date="1972" name="Endocrinology 1971: proceedings of the third international symposium">
        <title>Chemistry and physiology of the calcitonins: some recent advances.</title>
        <editorList>
            <person name="Taylor S."/>
        </editorList>
        <authorList>
            <person name="Keutmann H.T."/>
            <person name="Lequin R.M."/>
            <person name="Habener J.F."/>
            <person name="Singer F.R."/>
            <person name="Niall H.D."/>
            <person name="Potts J.T. Jr."/>
        </authorList>
    </citation>
    <scope>PRELIMINARY PROTEIN SEQUENCE</scope>
</reference>
<reference key="2">
    <citation type="journal article" date="1972" name="Nature New Biol.">
        <title>Synthesis of two natural salmon calcitonins.</title>
        <authorList>
            <person name="Pless J."/>
            <person name="Bauer W."/>
            <person name="Bossert H."/>
            <person name="Zehnder K."/>
            <person name="Guttmann S."/>
        </authorList>
    </citation>
    <scope>SYNTHESIS</scope>
    <scope>AMIDATION AT PRO-32</scope>
</reference>
<organism>
    <name type="scientific">Oncorhynchus nerka</name>
    <name type="common">Sockeye salmon</name>
    <name type="synonym">Salmo nerka</name>
    <dbReference type="NCBI Taxonomy" id="8023"/>
    <lineage>
        <taxon>Eukaryota</taxon>
        <taxon>Metazoa</taxon>
        <taxon>Chordata</taxon>
        <taxon>Craniata</taxon>
        <taxon>Vertebrata</taxon>
        <taxon>Euteleostomi</taxon>
        <taxon>Actinopterygii</taxon>
        <taxon>Neopterygii</taxon>
        <taxon>Teleostei</taxon>
        <taxon>Protacanthopterygii</taxon>
        <taxon>Salmoniformes</taxon>
        <taxon>Salmonidae</taxon>
        <taxon>Salmoninae</taxon>
        <taxon>Oncorhynchus</taxon>
    </lineage>
</organism>
<name>CALC2_ONCNE</name>